<comment type="function">
    <text evidence="1">NAD-dependent lysine deacetylase and desuccinylase that specifically removes acetyl and succinyl groups on target proteins. Modulates the activities of several proteins which are inactive in their acylated form.</text>
</comment>
<comment type="catalytic activity">
    <reaction evidence="1">
        <text>N(6)-acetyl-L-lysyl-[protein] + NAD(+) + H2O = 2''-O-acetyl-ADP-D-ribose + nicotinamide + L-lysyl-[protein]</text>
        <dbReference type="Rhea" id="RHEA:43636"/>
        <dbReference type="Rhea" id="RHEA-COMP:9752"/>
        <dbReference type="Rhea" id="RHEA-COMP:10731"/>
        <dbReference type="ChEBI" id="CHEBI:15377"/>
        <dbReference type="ChEBI" id="CHEBI:17154"/>
        <dbReference type="ChEBI" id="CHEBI:29969"/>
        <dbReference type="ChEBI" id="CHEBI:57540"/>
        <dbReference type="ChEBI" id="CHEBI:61930"/>
        <dbReference type="ChEBI" id="CHEBI:83767"/>
        <dbReference type="EC" id="2.3.1.286"/>
    </reaction>
</comment>
<comment type="catalytic activity">
    <reaction evidence="1">
        <text>N(6)-succinyl-L-lysyl-[protein] + NAD(+) + H2O = 2''-O-succinyl-ADP-D-ribose + nicotinamide + L-lysyl-[protein]</text>
        <dbReference type="Rhea" id="RHEA:47668"/>
        <dbReference type="Rhea" id="RHEA-COMP:9752"/>
        <dbReference type="Rhea" id="RHEA-COMP:11877"/>
        <dbReference type="ChEBI" id="CHEBI:15377"/>
        <dbReference type="ChEBI" id="CHEBI:17154"/>
        <dbReference type="ChEBI" id="CHEBI:29969"/>
        <dbReference type="ChEBI" id="CHEBI:57540"/>
        <dbReference type="ChEBI" id="CHEBI:87830"/>
        <dbReference type="ChEBI" id="CHEBI:87832"/>
    </reaction>
</comment>
<comment type="cofactor">
    <cofactor evidence="1">
        <name>Zn(2+)</name>
        <dbReference type="ChEBI" id="CHEBI:29105"/>
    </cofactor>
    <text evidence="1">Binds 1 zinc ion per subunit.</text>
</comment>
<comment type="subcellular location">
    <subcellularLocation>
        <location evidence="1">Cytoplasm</location>
    </subcellularLocation>
</comment>
<comment type="domain">
    <text evidence="1">2 residues (Tyr-66 and Arg-69) present in a large hydrophobic pocket are probably involved in substrate specificity. They are important for desuccinylation activity, but dispensable for deacetylation activity.</text>
</comment>
<comment type="similarity">
    <text evidence="1">Belongs to the sirtuin family. Class III subfamily.</text>
</comment>
<name>NPD_THET8</name>
<evidence type="ECO:0000255" key="1">
    <source>
        <dbReference type="HAMAP-Rule" id="MF_01121"/>
    </source>
</evidence>
<evidence type="ECO:0000255" key="2">
    <source>
        <dbReference type="PROSITE-ProRule" id="PRU00236"/>
    </source>
</evidence>
<feature type="chain" id="PRO_0000110364" description="NAD-dependent protein deacylase">
    <location>
        <begin position="1"/>
        <end position="254"/>
    </location>
</feature>
<feature type="domain" description="Deacetylase sirtuin-type" evidence="2">
    <location>
        <begin position="1"/>
        <end position="250"/>
    </location>
</feature>
<feature type="active site" description="Proton acceptor" evidence="2">
    <location>
        <position position="122"/>
    </location>
</feature>
<feature type="binding site" evidence="1">
    <location>
        <begin position="22"/>
        <end position="41"/>
    </location>
    <ligand>
        <name>NAD(+)</name>
        <dbReference type="ChEBI" id="CHEBI:57540"/>
    </ligand>
</feature>
<feature type="binding site" evidence="1">
    <location>
        <position position="66"/>
    </location>
    <ligand>
        <name>substrate</name>
    </ligand>
</feature>
<feature type="binding site" evidence="1">
    <location>
        <position position="69"/>
    </location>
    <ligand>
        <name>substrate</name>
    </ligand>
</feature>
<feature type="binding site" evidence="1">
    <location>
        <begin position="104"/>
        <end position="107"/>
    </location>
    <ligand>
        <name>NAD(+)</name>
        <dbReference type="ChEBI" id="CHEBI:57540"/>
    </ligand>
</feature>
<feature type="binding site" evidence="1">
    <location>
        <position position="130"/>
    </location>
    <ligand>
        <name>Zn(2+)</name>
        <dbReference type="ChEBI" id="CHEBI:29105"/>
    </ligand>
</feature>
<feature type="binding site" evidence="1">
    <location>
        <position position="133"/>
    </location>
    <ligand>
        <name>Zn(2+)</name>
        <dbReference type="ChEBI" id="CHEBI:29105"/>
    </ligand>
</feature>
<feature type="binding site" evidence="1">
    <location>
        <position position="149"/>
    </location>
    <ligand>
        <name>Zn(2+)</name>
        <dbReference type="ChEBI" id="CHEBI:29105"/>
    </ligand>
</feature>
<feature type="binding site" evidence="1">
    <location>
        <position position="152"/>
    </location>
    <ligand>
        <name>Zn(2+)</name>
        <dbReference type="ChEBI" id="CHEBI:29105"/>
    </ligand>
</feature>
<feature type="binding site" evidence="1">
    <location>
        <begin position="189"/>
        <end position="191"/>
    </location>
    <ligand>
        <name>NAD(+)</name>
        <dbReference type="ChEBI" id="CHEBI:57540"/>
    </ligand>
</feature>
<feature type="binding site" evidence="1">
    <location>
        <begin position="215"/>
        <end position="217"/>
    </location>
    <ligand>
        <name>NAD(+)</name>
        <dbReference type="ChEBI" id="CHEBI:57540"/>
    </ligand>
</feature>
<feature type="binding site" evidence="1">
    <location>
        <position position="233"/>
    </location>
    <ligand>
        <name>NAD(+)</name>
        <dbReference type="ChEBI" id="CHEBI:57540"/>
    </ligand>
</feature>
<dbReference type="EC" id="2.3.1.286" evidence="1 2"/>
<dbReference type="EMBL" id="AP008226">
    <property type="protein sequence ID" value="BAD71215.1"/>
    <property type="molecule type" value="Genomic_DNA"/>
</dbReference>
<dbReference type="RefSeq" id="WP_011228646.1">
    <property type="nucleotide sequence ID" value="NC_006461.1"/>
</dbReference>
<dbReference type="RefSeq" id="YP_144658.1">
    <property type="nucleotide sequence ID" value="NC_006461.1"/>
</dbReference>
<dbReference type="SMR" id="Q5SIH7"/>
<dbReference type="EnsemblBacteria" id="BAD71215">
    <property type="protein sequence ID" value="BAD71215"/>
    <property type="gene ID" value="BAD71215"/>
</dbReference>
<dbReference type="GeneID" id="3168869"/>
<dbReference type="KEGG" id="ttj:TTHA1392"/>
<dbReference type="eggNOG" id="COG0846">
    <property type="taxonomic scope" value="Bacteria"/>
</dbReference>
<dbReference type="HOGENOM" id="CLU_023643_3_1_0"/>
<dbReference type="PhylomeDB" id="Q5SIH7"/>
<dbReference type="Proteomes" id="UP000000532">
    <property type="component" value="Chromosome"/>
</dbReference>
<dbReference type="GO" id="GO:0005737">
    <property type="term" value="C:cytoplasm"/>
    <property type="evidence" value="ECO:0007669"/>
    <property type="project" value="UniProtKB-SubCell"/>
</dbReference>
<dbReference type="GO" id="GO:0017136">
    <property type="term" value="F:histone deacetylase activity, NAD-dependent"/>
    <property type="evidence" value="ECO:0007669"/>
    <property type="project" value="TreeGrafter"/>
</dbReference>
<dbReference type="GO" id="GO:0070403">
    <property type="term" value="F:NAD+ binding"/>
    <property type="evidence" value="ECO:0007669"/>
    <property type="project" value="UniProtKB-UniRule"/>
</dbReference>
<dbReference type="GO" id="GO:0036054">
    <property type="term" value="F:protein-malonyllysine demalonylase activity"/>
    <property type="evidence" value="ECO:0007669"/>
    <property type="project" value="InterPro"/>
</dbReference>
<dbReference type="GO" id="GO:0036055">
    <property type="term" value="F:protein-succinyllysine desuccinylase activity"/>
    <property type="evidence" value="ECO:0007669"/>
    <property type="project" value="UniProtKB-UniRule"/>
</dbReference>
<dbReference type="GO" id="GO:0008270">
    <property type="term" value="F:zinc ion binding"/>
    <property type="evidence" value="ECO:0007669"/>
    <property type="project" value="UniProtKB-UniRule"/>
</dbReference>
<dbReference type="CDD" id="cd01412">
    <property type="entry name" value="SIRT5_Af1_CobB"/>
    <property type="match status" value="1"/>
</dbReference>
<dbReference type="Gene3D" id="3.30.1600.10">
    <property type="entry name" value="SIR2/SIRT2 'Small Domain"/>
    <property type="match status" value="1"/>
</dbReference>
<dbReference type="Gene3D" id="3.40.50.1220">
    <property type="entry name" value="TPP-binding domain"/>
    <property type="match status" value="1"/>
</dbReference>
<dbReference type="HAMAP" id="MF_01121">
    <property type="entry name" value="Sirtuin_ClassIII"/>
    <property type="match status" value="1"/>
</dbReference>
<dbReference type="InterPro" id="IPR029035">
    <property type="entry name" value="DHS-like_NAD/FAD-binding_dom"/>
</dbReference>
<dbReference type="InterPro" id="IPR050134">
    <property type="entry name" value="NAD-dep_sirtuin_deacylases"/>
</dbReference>
<dbReference type="InterPro" id="IPR003000">
    <property type="entry name" value="Sirtuin"/>
</dbReference>
<dbReference type="InterPro" id="IPR026591">
    <property type="entry name" value="Sirtuin_cat_small_dom_sf"/>
</dbReference>
<dbReference type="InterPro" id="IPR027546">
    <property type="entry name" value="Sirtuin_class_III"/>
</dbReference>
<dbReference type="InterPro" id="IPR026590">
    <property type="entry name" value="Ssirtuin_cat_dom"/>
</dbReference>
<dbReference type="NCBIfam" id="NF001753">
    <property type="entry name" value="PRK00481.1-3"/>
    <property type="match status" value="1"/>
</dbReference>
<dbReference type="PANTHER" id="PTHR11085:SF4">
    <property type="entry name" value="NAD-DEPENDENT PROTEIN DEACYLASE"/>
    <property type="match status" value="1"/>
</dbReference>
<dbReference type="PANTHER" id="PTHR11085">
    <property type="entry name" value="NAD-DEPENDENT PROTEIN DEACYLASE SIRTUIN-5, MITOCHONDRIAL-RELATED"/>
    <property type="match status" value="1"/>
</dbReference>
<dbReference type="Pfam" id="PF02146">
    <property type="entry name" value="SIR2"/>
    <property type="match status" value="1"/>
</dbReference>
<dbReference type="SUPFAM" id="SSF52467">
    <property type="entry name" value="DHS-like NAD/FAD-binding domain"/>
    <property type="match status" value="1"/>
</dbReference>
<dbReference type="PROSITE" id="PS50305">
    <property type="entry name" value="SIRTUIN"/>
    <property type="match status" value="1"/>
</dbReference>
<keyword id="KW-0963">Cytoplasm</keyword>
<keyword id="KW-0479">Metal-binding</keyword>
<keyword id="KW-0520">NAD</keyword>
<keyword id="KW-1185">Reference proteome</keyword>
<keyword id="KW-0808">Transferase</keyword>
<keyword id="KW-0862">Zinc</keyword>
<accession>Q5SIH7</accession>
<proteinExistence type="inferred from homology"/>
<organism>
    <name type="scientific">Thermus thermophilus (strain ATCC 27634 / DSM 579 / HB8)</name>
    <dbReference type="NCBI Taxonomy" id="300852"/>
    <lineage>
        <taxon>Bacteria</taxon>
        <taxon>Thermotogati</taxon>
        <taxon>Deinococcota</taxon>
        <taxon>Deinococci</taxon>
        <taxon>Thermales</taxon>
        <taxon>Thermaceae</taxon>
        <taxon>Thermus</taxon>
    </lineage>
</organism>
<reference key="1">
    <citation type="submission" date="2004-11" db="EMBL/GenBank/DDBJ databases">
        <title>Complete genome sequence of Thermus thermophilus HB8.</title>
        <authorList>
            <person name="Masui R."/>
            <person name="Kurokawa K."/>
            <person name="Nakagawa N."/>
            <person name="Tokunaga F."/>
            <person name="Koyama Y."/>
            <person name="Shibata T."/>
            <person name="Oshima T."/>
            <person name="Yokoyama S."/>
            <person name="Yasunaga T."/>
            <person name="Kuramitsu S."/>
        </authorList>
    </citation>
    <scope>NUCLEOTIDE SEQUENCE [LARGE SCALE GENOMIC DNA]</scope>
    <source>
        <strain>ATCC 27634 / DSM 579 / HB8</strain>
    </source>
</reference>
<protein>
    <recommendedName>
        <fullName evidence="1">NAD-dependent protein deacylase</fullName>
        <ecNumber evidence="1 2">2.3.1.286</ecNumber>
    </recommendedName>
    <alternativeName>
        <fullName evidence="1">Regulatory protein SIR2 homolog</fullName>
    </alternativeName>
</protein>
<gene>
    <name evidence="1" type="primary">cobB</name>
    <name type="ordered locus">TTHA1392</name>
</gene>
<sequence length="254" mass="27867">MERLEEARKRLEEARRVAVLTGAGISKPSGIPTFRDAEGLWKNFNPLDYATPEAYARDPEKVWAWYAWRIQKVREAKPNPAHYALVELERRILSRGGSFLLVTQNVDGLHALAGSQNLVELHGNLLRARCEACGKRFPLPEAFAPPPFCPACGHRARPDVVWFGEFLPEGAWERAERAFAEADFALVVGTSAEVEPAASLGRIAFASGAYLVEVNPEPTPLTPLAHLSLRTGAVEGMALLLPPSPEDQAEGHLS</sequence>